<accession>Q5Z1W1</accession>
<feature type="chain" id="PRO_1000068123" description="Large ribosomal subunit protein uL23">
    <location>
        <begin position="1"/>
        <end position="101"/>
    </location>
</feature>
<organism>
    <name type="scientific">Nocardia farcinica (strain IFM 10152)</name>
    <dbReference type="NCBI Taxonomy" id="247156"/>
    <lineage>
        <taxon>Bacteria</taxon>
        <taxon>Bacillati</taxon>
        <taxon>Actinomycetota</taxon>
        <taxon>Actinomycetes</taxon>
        <taxon>Mycobacteriales</taxon>
        <taxon>Nocardiaceae</taxon>
        <taxon>Nocardia</taxon>
    </lineage>
</organism>
<sequence length="101" mass="11136">MTTIADPRDILLAPVISEKSYGLIEEGTYTFLVHPDSNKTQIKIAVEKVFGVKVTSVNTANRQGKRKRTRFGYGKRKNTKRALVTISADSKPIEIFGGPVA</sequence>
<comment type="function">
    <text evidence="1">One of the early assembly proteins it binds 23S rRNA. One of the proteins that surrounds the polypeptide exit tunnel on the outside of the ribosome. Forms the main docking site for trigger factor binding to the ribosome.</text>
</comment>
<comment type="subunit">
    <text evidence="1">Part of the 50S ribosomal subunit. Contacts protein L29, and trigger factor when it is bound to the ribosome.</text>
</comment>
<comment type="similarity">
    <text evidence="1">Belongs to the universal ribosomal protein uL23 family.</text>
</comment>
<gene>
    <name evidence="1" type="primary">rplW</name>
    <name type="ordered locus">NFA_7350</name>
</gene>
<name>RL23_NOCFA</name>
<evidence type="ECO:0000255" key="1">
    <source>
        <dbReference type="HAMAP-Rule" id="MF_01369"/>
    </source>
</evidence>
<evidence type="ECO:0000305" key="2"/>
<protein>
    <recommendedName>
        <fullName evidence="1">Large ribosomal subunit protein uL23</fullName>
    </recommendedName>
    <alternativeName>
        <fullName evidence="2">50S ribosomal protein L23</fullName>
    </alternativeName>
</protein>
<dbReference type="EMBL" id="AP006618">
    <property type="protein sequence ID" value="BAD55580.1"/>
    <property type="molecule type" value="Genomic_DNA"/>
</dbReference>
<dbReference type="RefSeq" id="WP_011207266.1">
    <property type="nucleotide sequence ID" value="NC_006361.1"/>
</dbReference>
<dbReference type="SMR" id="Q5Z1W1"/>
<dbReference type="STRING" id="247156.NFA_7350"/>
<dbReference type="GeneID" id="96239478"/>
<dbReference type="KEGG" id="nfa:NFA_7350"/>
<dbReference type="eggNOG" id="COG0089">
    <property type="taxonomic scope" value="Bacteria"/>
</dbReference>
<dbReference type="HOGENOM" id="CLU_037562_3_2_11"/>
<dbReference type="OrthoDB" id="9793353at2"/>
<dbReference type="Proteomes" id="UP000006820">
    <property type="component" value="Chromosome"/>
</dbReference>
<dbReference type="GO" id="GO:1990904">
    <property type="term" value="C:ribonucleoprotein complex"/>
    <property type="evidence" value="ECO:0007669"/>
    <property type="project" value="UniProtKB-KW"/>
</dbReference>
<dbReference type="GO" id="GO:0005840">
    <property type="term" value="C:ribosome"/>
    <property type="evidence" value="ECO:0007669"/>
    <property type="project" value="UniProtKB-KW"/>
</dbReference>
<dbReference type="GO" id="GO:0019843">
    <property type="term" value="F:rRNA binding"/>
    <property type="evidence" value="ECO:0007669"/>
    <property type="project" value="UniProtKB-UniRule"/>
</dbReference>
<dbReference type="GO" id="GO:0003735">
    <property type="term" value="F:structural constituent of ribosome"/>
    <property type="evidence" value="ECO:0007669"/>
    <property type="project" value="InterPro"/>
</dbReference>
<dbReference type="GO" id="GO:0006412">
    <property type="term" value="P:translation"/>
    <property type="evidence" value="ECO:0007669"/>
    <property type="project" value="UniProtKB-UniRule"/>
</dbReference>
<dbReference type="FunFam" id="3.30.70.330:FF:000001">
    <property type="entry name" value="50S ribosomal protein L23"/>
    <property type="match status" value="1"/>
</dbReference>
<dbReference type="Gene3D" id="3.30.70.330">
    <property type="match status" value="1"/>
</dbReference>
<dbReference type="HAMAP" id="MF_01369_B">
    <property type="entry name" value="Ribosomal_uL23_B"/>
    <property type="match status" value="1"/>
</dbReference>
<dbReference type="InterPro" id="IPR012677">
    <property type="entry name" value="Nucleotide-bd_a/b_plait_sf"/>
</dbReference>
<dbReference type="InterPro" id="IPR013025">
    <property type="entry name" value="Ribosomal_uL23-like"/>
</dbReference>
<dbReference type="InterPro" id="IPR012678">
    <property type="entry name" value="Ribosomal_uL23/eL15/eS24_sf"/>
</dbReference>
<dbReference type="NCBIfam" id="NF004363">
    <property type="entry name" value="PRK05738.2-4"/>
    <property type="match status" value="1"/>
</dbReference>
<dbReference type="NCBIfam" id="NF004364">
    <property type="entry name" value="PRK05738.2-5"/>
    <property type="match status" value="1"/>
</dbReference>
<dbReference type="PANTHER" id="PTHR11620">
    <property type="entry name" value="60S RIBOSOMAL PROTEIN L23A"/>
    <property type="match status" value="1"/>
</dbReference>
<dbReference type="Pfam" id="PF00276">
    <property type="entry name" value="Ribosomal_L23"/>
    <property type="match status" value="1"/>
</dbReference>
<dbReference type="SUPFAM" id="SSF54189">
    <property type="entry name" value="Ribosomal proteins S24e, L23 and L15e"/>
    <property type="match status" value="1"/>
</dbReference>
<keyword id="KW-1185">Reference proteome</keyword>
<keyword id="KW-0687">Ribonucleoprotein</keyword>
<keyword id="KW-0689">Ribosomal protein</keyword>
<keyword id="KW-0694">RNA-binding</keyword>
<keyword id="KW-0699">rRNA-binding</keyword>
<reference key="1">
    <citation type="journal article" date="2004" name="Proc. Natl. Acad. Sci. U.S.A.">
        <title>The complete genomic sequence of Nocardia farcinica IFM 10152.</title>
        <authorList>
            <person name="Ishikawa J."/>
            <person name="Yamashita A."/>
            <person name="Mikami Y."/>
            <person name="Hoshino Y."/>
            <person name="Kurita H."/>
            <person name="Hotta K."/>
            <person name="Shiba T."/>
            <person name="Hattori M."/>
        </authorList>
    </citation>
    <scope>NUCLEOTIDE SEQUENCE [LARGE SCALE GENOMIC DNA]</scope>
    <source>
        <strain>IFM 10152</strain>
    </source>
</reference>
<proteinExistence type="inferred from homology"/>